<accession>D2Y1Y6</accession>
<protein>
    <recommendedName>
        <fullName>Mu-theraphotoxin-Hhn2k</fullName>
        <shortName>Mu-TRTX-Hhn2k</shortName>
    </recommendedName>
    <alternativeName>
        <fullName>Hainantoxin-III-3</fullName>
        <shortName>HNTX-III-3</shortName>
    </alternativeName>
</protein>
<sequence>MKASMFLALAGLVLLFVVDYASESEEKEFPIELLSKIFAVDVFKGEERGCKGFDDSCTPGKNECCPNHACSNKHKWCKVYLGK</sequence>
<organism>
    <name type="scientific">Cyriopagopus hainanus</name>
    <name type="common">Chinese bird spider</name>
    <name type="synonym">Haplopelma hainanum</name>
    <dbReference type="NCBI Taxonomy" id="209901"/>
    <lineage>
        <taxon>Eukaryota</taxon>
        <taxon>Metazoa</taxon>
        <taxon>Ecdysozoa</taxon>
        <taxon>Arthropoda</taxon>
        <taxon>Chelicerata</taxon>
        <taxon>Arachnida</taxon>
        <taxon>Araneae</taxon>
        <taxon>Mygalomorphae</taxon>
        <taxon>Theraphosidae</taxon>
        <taxon>Haplopelma</taxon>
    </lineage>
</organism>
<comment type="function">
    <text evidence="1">Lethal neurotoxin. Selectively blocks tetrodotoxin-sensitive voltage-gated sodium channels (Nav). Does not affect tetrodotoxin-resistant voltage-gated sodium channels or calcium channels (By similarity).</text>
</comment>
<comment type="subunit">
    <text evidence="1">Monomer.</text>
</comment>
<comment type="subcellular location">
    <subcellularLocation>
        <location evidence="1">Secreted</location>
    </subcellularLocation>
</comment>
<comment type="tissue specificity">
    <text>Expressed by the venom gland.</text>
</comment>
<comment type="domain">
    <text evidence="1">The presence of a 'disulfide through disulfide knot' structurally defines this protein as a knottin.</text>
</comment>
<comment type="similarity">
    <text evidence="3">Belongs to the neurotoxin 10 (Hwtx-1) family. 15 (Hntx-3) subfamily.</text>
</comment>
<name>H3C01_CYRHA</name>
<keyword id="KW-0027">Amidation</keyword>
<keyword id="KW-1015">Disulfide bond</keyword>
<keyword id="KW-0872">Ion channel impairing toxin</keyword>
<keyword id="KW-0960">Knottin</keyword>
<keyword id="KW-0528">Neurotoxin</keyword>
<keyword id="KW-0638">Presynaptic neurotoxin</keyword>
<keyword id="KW-0964">Secreted</keyword>
<keyword id="KW-0732">Signal</keyword>
<keyword id="KW-0800">Toxin</keyword>
<keyword id="KW-0738">Voltage-gated sodium channel impairing toxin</keyword>
<proteinExistence type="evidence at transcript level"/>
<dbReference type="EMBL" id="GU292863">
    <property type="protein sequence ID" value="ADB56679.1"/>
    <property type="molecule type" value="mRNA"/>
</dbReference>
<dbReference type="SMR" id="D2Y1Y6"/>
<dbReference type="ArachnoServer" id="AS001591">
    <property type="toxin name" value="mu-theraphotoxin-Hhn2k"/>
</dbReference>
<dbReference type="GO" id="GO:0005576">
    <property type="term" value="C:extracellular region"/>
    <property type="evidence" value="ECO:0007669"/>
    <property type="project" value="UniProtKB-SubCell"/>
</dbReference>
<dbReference type="GO" id="GO:0044231">
    <property type="term" value="C:host cell presynaptic membrane"/>
    <property type="evidence" value="ECO:0007669"/>
    <property type="project" value="UniProtKB-KW"/>
</dbReference>
<dbReference type="GO" id="GO:0008200">
    <property type="term" value="F:ion channel inhibitor activity"/>
    <property type="evidence" value="ECO:0007669"/>
    <property type="project" value="InterPro"/>
</dbReference>
<dbReference type="GO" id="GO:0017080">
    <property type="term" value="F:sodium channel regulator activity"/>
    <property type="evidence" value="ECO:0007669"/>
    <property type="project" value="UniProtKB-KW"/>
</dbReference>
<dbReference type="GO" id="GO:0090729">
    <property type="term" value="F:toxin activity"/>
    <property type="evidence" value="ECO:0007669"/>
    <property type="project" value="UniProtKB-KW"/>
</dbReference>
<dbReference type="InterPro" id="IPR011696">
    <property type="entry name" value="Huwentoxin-1"/>
</dbReference>
<dbReference type="InterPro" id="IPR013140">
    <property type="entry name" value="Huwentoxin_CS1"/>
</dbReference>
<dbReference type="Pfam" id="PF07740">
    <property type="entry name" value="Toxin_12"/>
    <property type="match status" value="1"/>
</dbReference>
<dbReference type="SUPFAM" id="SSF57059">
    <property type="entry name" value="omega toxin-like"/>
    <property type="match status" value="1"/>
</dbReference>
<dbReference type="PROSITE" id="PS60021">
    <property type="entry name" value="HWTX_1"/>
    <property type="match status" value="1"/>
</dbReference>
<reference key="1">
    <citation type="journal article" date="2010" name="J. Proteome Res.">
        <title>Molecular diversification of peptide toxins from the tarantula Haplopelma hainanum (Ornithoctonus hainana) venom based on transcriptomic, peptidomic, and genomic analyses.</title>
        <authorList>
            <person name="Tang X."/>
            <person name="Zhang Y."/>
            <person name="Hu W."/>
            <person name="Xu D."/>
            <person name="Tao H."/>
            <person name="Yang X."/>
            <person name="Li Y."/>
            <person name="Jiang L."/>
            <person name="Liang S."/>
        </authorList>
    </citation>
    <scope>NUCLEOTIDE SEQUENCE [LARGE SCALE MRNA]</scope>
    <source>
        <tissue>Venom gland</tissue>
    </source>
</reference>
<feature type="signal peptide" evidence="2">
    <location>
        <begin position="1"/>
        <end position="21"/>
    </location>
</feature>
<feature type="propeptide" id="PRO_0000400538" evidence="1">
    <location>
        <begin position="22"/>
        <end position="48"/>
    </location>
</feature>
<feature type="peptide" id="PRO_0000400539" description="Mu-theraphotoxin-Hhn2k">
    <location>
        <begin position="49"/>
        <end position="81"/>
    </location>
</feature>
<feature type="modified residue" description="Leucine amide" evidence="1">
    <location>
        <position position="81"/>
    </location>
</feature>
<feature type="disulfide bond" evidence="1">
    <location>
        <begin position="50"/>
        <end position="65"/>
    </location>
</feature>
<feature type="disulfide bond" evidence="1">
    <location>
        <begin position="57"/>
        <end position="70"/>
    </location>
</feature>
<feature type="disulfide bond" evidence="1">
    <location>
        <begin position="64"/>
        <end position="77"/>
    </location>
</feature>
<evidence type="ECO:0000250" key="1"/>
<evidence type="ECO:0000255" key="2"/>
<evidence type="ECO:0000305" key="3"/>